<proteinExistence type="inferred from homology"/>
<gene>
    <name type="primary">RRG1</name>
    <name type="ordered locus">AFR174W</name>
</gene>
<keyword id="KW-0496">Mitochondrion</keyword>
<keyword id="KW-1185">Reference proteome</keyword>
<sequence>MSSLYEKASDFDTATLQTRMVQPFTRYAAHRHLVLSWYRYTLRITNYVPISNLLRRQTREVVRETILKHRGTQSSWKVLQLLEDMKQLNSHLAVAKAVGAWQIIQKYAAKPTPQEERLPMPAKHYNDPSKDKEAHYYWRYHRDLTRKHLLPAVIPNDYMEKLIAPLARHASDLRTLGIVQRNIQRSPKAYLSYTMVGSDRLWFVRSAVNRKKRQSRRLTAMIVALRRAAQRSLDMSNRLKEEVIWATHEAKWEQLLATGTLPPDGAKSDWKPGRAWLEPYEAAFRNQLANRKRTSQKLKRYSAQISKVHLPYYIKCSAAMHTRRAKRFECFQKELHTVNPFVPGRDLGSLLSKWRMVNGKNYYR</sequence>
<organism>
    <name type="scientific">Eremothecium gossypii (strain ATCC 10895 / CBS 109.51 / FGSC 9923 / NRRL Y-1056)</name>
    <name type="common">Yeast</name>
    <name type="synonym">Ashbya gossypii</name>
    <dbReference type="NCBI Taxonomy" id="284811"/>
    <lineage>
        <taxon>Eukaryota</taxon>
        <taxon>Fungi</taxon>
        <taxon>Dikarya</taxon>
        <taxon>Ascomycota</taxon>
        <taxon>Saccharomycotina</taxon>
        <taxon>Saccharomycetes</taxon>
        <taxon>Saccharomycetales</taxon>
        <taxon>Saccharomycetaceae</taxon>
        <taxon>Eremothecium</taxon>
    </lineage>
</organism>
<evidence type="ECO:0000250" key="1"/>
<evidence type="ECO:0000305" key="2"/>
<feature type="chain" id="PRO_0000402244" description="Required for respiratory growth protein 1, mitochondrial">
    <location>
        <begin position="1"/>
        <end position="364"/>
    </location>
</feature>
<accession>Q753Z8</accession>
<dbReference type="EMBL" id="AE016819">
    <property type="protein sequence ID" value="AAS53545.1"/>
    <property type="molecule type" value="Genomic_DNA"/>
</dbReference>
<dbReference type="RefSeq" id="NP_985721.1">
    <property type="nucleotide sequence ID" value="NM_211075.1"/>
</dbReference>
<dbReference type="SMR" id="Q753Z8"/>
<dbReference type="FunCoup" id="Q753Z8">
    <property type="interactions" value="32"/>
</dbReference>
<dbReference type="EnsemblFungi" id="AAS53545">
    <property type="protein sequence ID" value="AAS53545"/>
    <property type="gene ID" value="AGOS_AFR174W"/>
</dbReference>
<dbReference type="GeneID" id="4621978"/>
<dbReference type="KEGG" id="ago:AGOS_AFR174W"/>
<dbReference type="eggNOG" id="ENOG502RYGE">
    <property type="taxonomic scope" value="Eukaryota"/>
</dbReference>
<dbReference type="HOGENOM" id="CLU_062256_0_0_1"/>
<dbReference type="InParanoid" id="Q753Z8"/>
<dbReference type="OMA" id="RIWFIRS"/>
<dbReference type="OrthoDB" id="4065996at2759"/>
<dbReference type="Proteomes" id="UP000000591">
    <property type="component" value="Chromosome VI"/>
</dbReference>
<dbReference type="GO" id="GO:0005739">
    <property type="term" value="C:mitochondrion"/>
    <property type="evidence" value="ECO:0007669"/>
    <property type="project" value="UniProtKB-SubCell"/>
</dbReference>
<name>RRG1_EREGS</name>
<reference key="1">
    <citation type="journal article" date="2004" name="Science">
        <title>The Ashbya gossypii genome as a tool for mapping the ancient Saccharomyces cerevisiae genome.</title>
        <authorList>
            <person name="Dietrich F.S."/>
            <person name="Voegeli S."/>
            <person name="Brachat S."/>
            <person name="Lerch A."/>
            <person name="Gates K."/>
            <person name="Steiner S."/>
            <person name="Mohr C."/>
            <person name="Poehlmann R."/>
            <person name="Luedi P."/>
            <person name="Choi S."/>
            <person name="Wing R.A."/>
            <person name="Flavier A."/>
            <person name="Gaffney T.D."/>
            <person name="Philippsen P."/>
        </authorList>
    </citation>
    <scope>NUCLEOTIDE SEQUENCE [LARGE SCALE GENOMIC DNA]</scope>
    <source>
        <strain>ATCC 10895 / CBS 109.51 / FGSC 9923 / NRRL Y-1056</strain>
    </source>
</reference>
<reference key="2">
    <citation type="journal article" date="2013" name="G3 (Bethesda)">
        <title>Genomes of Ashbya fungi isolated from insects reveal four mating-type loci, numerous translocations, lack of transposons, and distinct gene duplications.</title>
        <authorList>
            <person name="Dietrich F.S."/>
            <person name="Voegeli S."/>
            <person name="Kuo S."/>
            <person name="Philippsen P."/>
        </authorList>
    </citation>
    <scope>GENOME REANNOTATION</scope>
    <source>
        <strain>ATCC 10895 / CBS 109.51 / FGSC 9923 / NRRL Y-1056</strain>
    </source>
</reference>
<comment type="function">
    <text evidence="1">Essential for respiratory growth and required for mitochondrial protein synthesis. Required for vacuolar acidification (By similarity).</text>
</comment>
<comment type="subcellular location">
    <subcellularLocation>
        <location evidence="1">Mitochondrion</location>
    </subcellularLocation>
</comment>
<comment type="similarity">
    <text evidence="2">Belongs to the RRG1 family.</text>
</comment>
<protein>
    <recommendedName>
        <fullName>Required for respiratory growth protein 1, mitochondrial</fullName>
    </recommendedName>
</protein>